<dbReference type="EMBL" id="CP000027">
    <property type="protein sequence ID" value="AAW39979.1"/>
    <property type="molecule type" value="Genomic_DNA"/>
</dbReference>
<dbReference type="RefSeq" id="WP_010936486.1">
    <property type="nucleotide sequence ID" value="NC_002936.3"/>
</dbReference>
<dbReference type="SMR" id="Q3Z8G4"/>
<dbReference type="FunCoup" id="Q3Z8G4">
    <property type="interactions" value="249"/>
</dbReference>
<dbReference type="STRING" id="243164.DET0751"/>
<dbReference type="GeneID" id="3229941"/>
<dbReference type="KEGG" id="det:DET0751"/>
<dbReference type="eggNOG" id="COG0291">
    <property type="taxonomic scope" value="Bacteria"/>
</dbReference>
<dbReference type="HOGENOM" id="CLU_169643_4_1_0"/>
<dbReference type="InParanoid" id="Q3Z8G4"/>
<dbReference type="Proteomes" id="UP000008289">
    <property type="component" value="Chromosome"/>
</dbReference>
<dbReference type="GO" id="GO:0022625">
    <property type="term" value="C:cytosolic large ribosomal subunit"/>
    <property type="evidence" value="ECO:0007669"/>
    <property type="project" value="TreeGrafter"/>
</dbReference>
<dbReference type="GO" id="GO:0003735">
    <property type="term" value="F:structural constituent of ribosome"/>
    <property type="evidence" value="ECO:0007669"/>
    <property type="project" value="InterPro"/>
</dbReference>
<dbReference type="GO" id="GO:0006412">
    <property type="term" value="P:translation"/>
    <property type="evidence" value="ECO:0007669"/>
    <property type="project" value="UniProtKB-UniRule"/>
</dbReference>
<dbReference type="FunFam" id="4.10.410.60:FF:000001">
    <property type="entry name" value="50S ribosomal protein L35"/>
    <property type="match status" value="1"/>
</dbReference>
<dbReference type="Gene3D" id="4.10.410.60">
    <property type="match status" value="1"/>
</dbReference>
<dbReference type="HAMAP" id="MF_00514">
    <property type="entry name" value="Ribosomal_bL35"/>
    <property type="match status" value="1"/>
</dbReference>
<dbReference type="InterPro" id="IPR001706">
    <property type="entry name" value="Ribosomal_bL35"/>
</dbReference>
<dbReference type="InterPro" id="IPR021137">
    <property type="entry name" value="Ribosomal_bL35-like"/>
</dbReference>
<dbReference type="InterPro" id="IPR037229">
    <property type="entry name" value="Ribosomal_bL35_sf"/>
</dbReference>
<dbReference type="NCBIfam" id="TIGR00001">
    <property type="entry name" value="rpmI_bact"/>
    <property type="match status" value="1"/>
</dbReference>
<dbReference type="PANTHER" id="PTHR33343">
    <property type="entry name" value="54S RIBOSOMAL PROTEIN BL35M"/>
    <property type="match status" value="1"/>
</dbReference>
<dbReference type="PANTHER" id="PTHR33343:SF1">
    <property type="entry name" value="LARGE RIBOSOMAL SUBUNIT PROTEIN BL35M"/>
    <property type="match status" value="1"/>
</dbReference>
<dbReference type="Pfam" id="PF01632">
    <property type="entry name" value="Ribosomal_L35p"/>
    <property type="match status" value="1"/>
</dbReference>
<dbReference type="PRINTS" id="PR00064">
    <property type="entry name" value="RIBOSOMALL35"/>
</dbReference>
<dbReference type="SUPFAM" id="SSF143034">
    <property type="entry name" value="L35p-like"/>
    <property type="match status" value="1"/>
</dbReference>
<accession>Q3Z8G4</accession>
<comment type="similarity">
    <text evidence="1">Belongs to the bacterial ribosomal protein bL35 family.</text>
</comment>
<gene>
    <name evidence="1" type="primary">rpmI</name>
    <name type="ordered locus">DET0751</name>
</gene>
<organism>
    <name type="scientific">Dehalococcoides mccartyi (strain ATCC BAA-2266 / KCTC 15142 / 195)</name>
    <name type="common">Dehalococcoides ethenogenes (strain 195)</name>
    <dbReference type="NCBI Taxonomy" id="243164"/>
    <lineage>
        <taxon>Bacteria</taxon>
        <taxon>Bacillati</taxon>
        <taxon>Chloroflexota</taxon>
        <taxon>Dehalococcoidia</taxon>
        <taxon>Dehalococcoidales</taxon>
        <taxon>Dehalococcoidaceae</taxon>
        <taxon>Dehalococcoides</taxon>
    </lineage>
</organism>
<keyword id="KW-0687">Ribonucleoprotein</keyword>
<keyword id="KW-0689">Ribosomal protein</keyword>
<proteinExistence type="inferred from homology"/>
<evidence type="ECO:0000255" key="1">
    <source>
        <dbReference type="HAMAP-Rule" id="MF_00514"/>
    </source>
</evidence>
<evidence type="ECO:0000305" key="2"/>
<reference key="1">
    <citation type="journal article" date="2005" name="Science">
        <title>Genome sequence of the PCE-dechlorinating bacterium Dehalococcoides ethenogenes.</title>
        <authorList>
            <person name="Seshadri R."/>
            <person name="Adrian L."/>
            <person name="Fouts D.E."/>
            <person name="Eisen J.A."/>
            <person name="Phillippy A.M."/>
            <person name="Methe B.A."/>
            <person name="Ward N.L."/>
            <person name="Nelson W.C."/>
            <person name="DeBoy R.T."/>
            <person name="Khouri H.M."/>
            <person name="Kolonay J.F."/>
            <person name="Dodson R.J."/>
            <person name="Daugherty S.C."/>
            <person name="Brinkac L.M."/>
            <person name="Sullivan S.A."/>
            <person name="Madupu R."/>
            <person name="Nelson K.E."/>
            <person name="Kang K.H."/>
            <person name="Impraim M."/>
            <person name="Tran K."/>
            <person name="Robinson J.M."/>
            <person name="Forberger H.A."/>
            <person name="Fraser C.M."/>
            <person name="Zinder S.H."/>
            <person name="Heidelberg J.F."/>
        </authorList>
    </citation>
    <scope>NUCLEOTIDE SEQUENCE [LARGE SCALE GENOMIC DNA]</scope>
    <source>
        <strain>ATCC BAA-2266 / KCTC 15142 / 195</strain>
    </source>
</reference>
<feature type="chain" id="PRO_0000258667" description="Large ribosomal subunit protein bL35">
    <location>
        <begin position="1"/>
        <end position="67"/>
    </location>
</feature>
<name>RL35_DEHM1</name>
<protein>
    <recommendedName>
        <fullName evidence="1">Large ribosomal subunit protein bL35</fullName>
    </recommendedName>
    <alternativeName>
        <fullName evidence="2">50S ribosomal protein L35</fullName>
    </alternativeName>
</protein>
<sequence>MPKMKTRKTAAKRFHVTGTGKIMRSKGMKSHLRRNKSARVRRQFDEMSQVAGVDRARIQKLIPYGVS</sequence>